<sequence>MDVRRRSEKPVYPSKVFGADEKPLKPHNNQQQEDNNTLLIDASDALPLPLYLTNGLFFTMFFSVMYFLLSRWREKIRNSTPLHVVTLSELGAIVSLIASVIYLLGFFGIGFVQTFVSRGNNDSWDENDEEFLLKEDSRCGPATTLGCAIPAPPARQISPMAPPQPAMSMVEKPSPLITPASSEEDEEIINSVVQGKFPSYSLVIQLGDVSAAASLRKEVMQRITGKSLEGLPLEGFTYESILGQCCEMPIGYVQIPVGIAGPLLLNGKEFSVPMATTEGCLVASTNRGCKAIYASGGATCIVLRDGMTRAPCVRFGTAKRAAELKFFVEDPIKFETLANVFNQSSRFGRLQRIQCAIAGKNLYMRFVCSTGDAMGMNMVSKGVQNVLDYLQNEYPDMDVIGISGNFCSDKKPAAVNWIEGRGKSVVCEAIITEEVVKKVLKTEVAALVELNMLKNLTGSAMAGALGGFNAHASNIVSAVFIATGQDPAQNIESSHCITMMEAVNDGKDLHISVTMPSIEVGTVGGGTQLASQSACLNLLGVKGANREAPGSNARLLATVVAGSVLAGELSLMSAISAGQLVNSHMKYNRSTKASS</sequence>
<dbReference type="EC" id="1.1.1.34"/>
<dbReference type="EMBL" id="U51985">
    <property type="protein sequence ID" value="AAB52551.1"/>
    <property type="molecule type" value="mRNA"/>
</dbReference>
<dbReference type="RefSeq" id="NP_001275402.1">
    <property type="nucleotide sequence ID" value="NM_001288473.1"/>
</dbReference>
<dbReference type="SMR" id="Q41437"/>
<dbReference type="STRING" id="4113.Q41437"/>
<dbReference type="GlyCosmos" id="Q41437">
    <property type="glycosylation" value="5 sites, No reported glycans"/>
</dbReference>
<dbReference type="PaxDb" id="4113-PGSC0003DMT400008902"/>
<dbReference type="GeneID" id="102577889"/>
<dbReference type="KEGG" id="sot:102577889"/>
<dbReference type="eggNOG" id="KOG2480">
    <property type="taxonomic scope" value="Eukaryota"/>
</dbReference>
<dbReference type="InParanoid" id="Q41437"/>
<dbReference type="UniPathway" id="UPA00058">
    <property type="reaction ID" value="UER00103"/>
</dbReference>
<dbReference type="Proteomes" id="UP000011115">
    <property type="component" value="Unassembled WGS sequence"/>
</dbReference>
<dbReference type="ExpressionAtlas" id="Q41437">
    <property type="expression patterns" value="baseline and differential"/>
</dbReference>
<dbReference type="GO" id="GO:0005789">
    <property type="term" value="C:endoplasmic reticulum membrane"/>
    <property type="evidence" value="ECO:0000318"/>
    <property type="project" value="GO_Central"/>
</dbReference>
<dbReference type="GO" id="GO:0005778">
    <property type="term" value="C:peroxisomal membrane"/>
    <property type="evidence" value="ECO:0000318"/>
    <property type="project" value="GO_Central"/>
</dbReference>
<dbReference type="GO" id="GO:0004420">
    <property type="term" value="F:hydroxymethylglutaryl-CoA reductase (NADPH) activity"/>
    <property type="evidence" value="ECO:0000318"/>
    <property type="project" value="GO_Central"/>
</dbReference>
<dbReference type="GO" id="GO:0015936">
    <property type="term" value="P:coenzyme A metabolic process"/>
    <property type="evidence" value="ECO:0007669"/>
    <property type="project" value="InterPro"/>
</dbReference>
<dbReference type="GO" id="GO:0008299">
    <property type="term" value="P:isoprenoid biosynthetic process"/>
    <property type="evidence" value="ECO:0000318"/>
    <property type="project" value="GO_Central"/>
</dbReference>
<dbReference type="GO" id="GO:0016126">
    <property type="term" value="P:sterol biosynthetic process"/>
    <property type="evidence" value="ECO:0000318"/>
    <property type="project" value="GO_Central"/>
</dbReference>
<dbReference type="CDD" id="cd00643">
    <property type="entry name" value="HMG-CoA_reductase_classI"/>
    <property type="match status" value="1"/>
</dbReference>
<dbReference type="FunFam" id="1.10.3270.10:FF:000002">
    <property type="entry name" value="3-hydroxy-3-methylglutaryl coenzyme A reductase"/>
    <property type="match status" value="1"/>
</dbReference>
<dbReference type="FunFam" id="3.30.70.420:FF:000001">
    <property type="entry name" value="3-hydroxy-3-methylglutaryl coenzyme A reductase"/>
    <property type="match status" value="1"/>
</dbReference>
<dbReference type="FunFam" id="3.90.770.10:FF:000001">
    <property type="entry name" value="3-hydroxy-3-methylglutaryl coenzyme A reductase"/>
    <property type="match status" value="1"/>
</dbReference>
<dbReference type="Gene3D" id="3.90.770.10">
    <property type="entry name" value="3-hydroxy-3-methylglutaryl-coenzyme A Reductase, Chain A, domain 2"/>
    <property type="match status" value="1"/>
</dbReference>
<dbReference type="Gene3D" id="1.10.3270.10">
    <property type="entry name" value="HMGR, N-terminal domain"/>
    <property type="match status" value="1"/>
</dbReference>
<dbReference type="Gene3D" id="3.30.70.420">
    <property type="entry name" value="Hydroxymethylglutaryl-CoA reductase, class I/II, NAD/NADP-binding domain"/>
    <property type="match status" value="1"/>
</dbReference>
<dbReference type="InterPro" id="IPR002202">
    <property type="entry name" value="HMG_CoA_Rdtase"/>
</dbReference>
<dbReference type="InterPro" id="IPR023074">
    <property type="entry name" value="HMG_CoA_Rdtase_cat_sf"/>
</dbReference>
<dbReference type="InterPro" id="IPR023076">
    <property type="entry name" value="HMG_CoA_Rdtase_CS"/>
</dbReference>
<dbReference type="InterPro" id="IPR004554">
    <property type="entry name" value="HMG_CoA_Rdtase_eu_arc"/>
</dbReference>
<dbReference type="InterPro" id="IPR023282">
    <property type="entry name" value="HMG_CoA_Rdtase_N"/>
</dbReference>
<dbReference type="InterPro" id="IPR009023">
    <property type="entry name" value="HMG_CoA_Rdtase_NAD(P)-bd_sf"/>
</dbReference>
<dbReference type="InterPro" id="IPR009029">
    <property type="entry name" value="HMG_CoA_Rdtase_sub-bd_dom_sf"/>
</dbReference>
<dbReference type="NCBIfam" id="TIGR00533">
    <property type="entry name" value="HMG_CoA_R_NADP"/>
    <property type="match status" value="1"/>
</dbReference>
<dbReference type="PANTHER" id="PTHR10572">
    <property type="entry name" value="3-HYDROXY-3-METHYLGLUTARYL-COENZYME A REDUCTASE"/>
    <property type="match status" value="1"/>
</dbReference>
<dbReference type="PANTHER" id="PTHR10572:SF24">
    <property type="entry name" value="3-HYDROXY-3-METHYLGLUTARYL-COENZYME A REDUCTASE"/>
    <property type="match status" value="1"/>
</dbReference>
<dbReference type="Pfam" id="PF00368">
    <property type="entry name" value="HMG-CoA_red"/>
    <property type="match status" value="1"/>
</dbReference>
<dbReference type="PRINTS" id="PR00071">
    <property type="entry name" value="HMGCOARDTASE"/>
</dbReference>
<dbReference type="SUPFAM" id="SSF55035">
    <property type="entry name" value="NAD-binding domain of HMG-CoA reductase"/>
    <property type="match status" value="1"/>
</dbReference>
<dbReference type="SUPFAM" id="SSF56542">
    <property type="entry name" value="Substrate-binding domain of HMG-CoA reductase"/>
    <property type="match status" value="1"/>
</dbReference>
<dbReference type="PROSITE" id="PS00066">
    <property type="entry name" value="HMG_COA_REDUCTASE_1"/>
    <property type="match status" value="1"/>
</dbReference>
<dbReference type="PROSITE" id="PS00318">
    <property type="entry name" value="HMG_COA_REDUCTASE_2"/>
    <property type="match status" value="1"/>
</dbReference>
<dbReference type="PROSITE" id="PS01192">
    <property type="entry name" value="HMG_COA_REDUCTASE_3"/>
    <property type="match status" value="1"/>
</dbReference>
<dbReference type="PROSITE" id="PS50065">
    <property type="entry name" value="HMG_COA_REDUCTASE_4"/>
    <property type="match status" value="1"/>
</dbReference>
<comment type="function">
    <text>Catalyzes the synthesis of mevalonate. The specific precursor of all isoprenoid compounds present in plants.</text>
</comment>
<comment type="catalytic activity">
    <reaction evidence="3">
        <text>(R)-mevalonate + 2 NADP(+) + CoA = (3S)-3-hydroxy-3-methylglutaryl-CoA + 2 NADPH + 2 H(+)</text>
        <dbReference type="Rhea" id="RHEA:15989"/>
        <dbReference type="ChEBI" id="CHEBI:15378"/>
        <dbReference type="ChEBI" id="CHEBI:36464"/>
        <dbReference type="ChEBI" id="CHEBI:43074"/>
        <dbReference type="ChEBI" id="CHEBI:57287"/>
        <dbReference type="ChEBI" id="CHEBI:57783"/>
        <dbReference type="ChEBI" id="CHEBI:58349"/>
        <dbReference type="EC" id="1.1.1.34"/>
    </reaction>
</comment>
<comment type="pathway">
    <text>Metabolic intermediate biosynthesis; (R)-mevalonate biosynthesis; (R)-mevalonate from acetyl-CoA: step 3/3.</text>
</comment>
<comment type="subcellular location">
    <subcellularLocation>
        <location>Endoplasmic reticulum membrane</location>
        <topology>Multi-pass membrane protein</topology>
    </subcellularLocation>
</comment>
<comment type="tissue specificity">
    <text>Expressed in young flowers and in mature sepals and ovaries.</text>
</comment>
<comment type="similarity">
    <text evidence="4">Belongs to the HMG-CoA reductase family.</text>
</comment>
<accession>Q41437</accession>
<proteinExistence type="evidence at transcript level"/>
<feature type="chain" id="PRO_0000114449" description="3-hydroxy-3-methylglutaryl-coenzyme A reductase 2">
    <location>
        <begin position="1"/>
        <end position="595"/>
    </location>
</feature>
<feature type="transmembrane region" description="Helical" evidence="2">
    <location>
        <begin position="48"/>
        <end position="68"/>
    </location>
</feature>
<feature type="transmembrane region" description="Helical" evidence="2">
    <location>
        <begin position="92"/>
        <end position="112"/>
    </location>
</feature>
<feature type="region of interest" description="Linker" evidence="1">
    <location>
        <begin position="113"/>
        <end position="183"/>
    </location>
</feature>
<feature type="region of interest" description="Catalytic" evidence="1">
    <location>
        <begin position="184"/>
        <end position="595"/>
    </location>
</feature>
<feature type="active site" description="Charge relay system" evidence="1">
    <location>
        <position position="278"/>
    </location>
</feature>
<feature type="active site" description="Charge relay system" evidence="1">
    <location>
        <position position="410"/>
    </location>
</feature>
<feature type="active site" description="Charge relay system" evidence="1">
    <location>
        <position position="486"/>
    </location>
</feature>
<feature type="active site" description="Proton donor" evidence="3">
    <location>
        <position position="584"/>
    </location>
</feature>
<feature type="glycosylation site" description="N-linked (GlcNAc...) asparagine" evidence="2">
    <location>
        <position position="35"/>
    </location>
</feature>
<feature type="glycosylation site" description="N-linked (GlcNAc...) asparagine" evidence="2">
    <location>
        <position position="121"/>
    </location>
</feature>
<feature type="glycosylation site" description="N-linked (GlcNAc...) asparagine" evidence="2">
    <location>
        <position position="342"/>
    </location>
</feature>
<feature type="glycosylation site" description="N-linked (GlcNAc...) asparagine" evidence="2">
    <location>
        <position position="455"/>
    </location>
</feature>
<feature type="glycosylation site" description="N-linked (GlcNAc...) asparagine" evidence="2">
    <location>
        <position position="588"/>
    </location>
</feature>
<name>HMDH2_SOLTU</name>
<keyword id="KW-0256">Endoplasmic reticulum</keyword>
<keyword id="KW-0325">Glycoprotein</keyword>
<keyword id="KW-0414">Isoprene biosynthesis</keyword>
<keyword id="KW-0472">Membrane</keyword>
<keyword id="KW-0521">NADP</keyword>
<keyword id="KW-0560">Oxidoreductase</keyword>
<keyword id="KW-1185">Reference proteome</keyword>
<keyword id="KW-0812">Transmembrane</keyword>
<keyword id="KW-1133">Transmembrane helix</keyword>
<protein>
    <recommendedName>
        <fullName>3-hydroxy-3-methylglutaryl-coenzyme A reductase 2</fullName>
        <shortName>HMG-CoA reductase 2</shortName>
        <ecNumber>1.1.1.34</ecNumber>
    </recommendedName>
    <alternativeName>
        <fullName>HMG2.2</fullName>
    </alternativeName>
</protein>
<evidence type="ECO:0000250" key="1"/>
<evidence type="ECO:0000255" key="2"/>
<evidence type="ECO:0000255" key="3">
    <source>
        <dbReference type="PROSITE-ProRule" id="PRU10003"/>
    </source>
</evidence>
<evidence type="ECO:0000305" key="4"/>
<reference key="1">
    <citation type="journal article" date="1997" name="Plant Mol. Biol.">
        <title>HMG-CoA reductase gene families that differentially accumulate transcripts in potato tubers are developmentally expressed in floral tissues.</title>
        <authorList>
            <person name="Korth K.L."/>
            <person name="Stermer B.A."/>
            <person name="Bhattacharyya M.K."/>
            <person name="Dixon R.A."/>
        </authorList>
    </citation>
    <scope>NUCLEOTIDE SEQUENCE [MRNA]</scope>
    <source>
        <strain>cv. Kennebec</strain>
        <tissue>Tuber</tissue>
    </source>
</reference>
<gene>
    <name type="primary">HMG2</name>
</gene>
<organism>
    <name type="scientific">Solanum tuberosum</name>
    <name type="common">Potato</name>
    <dbReference type="NCBI Taxonomy" id="4113"/>
    <lineage>
        <taxon>Eukaryota</taxon>
        <taxon>Viridiplantae</taxon>
        <taxon>Streptophyta</taxon>
        <taxon>Embryophyta</taxon>
        <taxon>Tracheophyta</taxon>
        <taxon>Spermatophyta</taxon>
        <taxon>Magnoliopsida</taxon>
        <taxon>eudicotyledons</taxon>
        <taxon>Gunneridae</taxon>
        <taxon>Pentapetalae</taxon>
        <taxon>asterids</taxon>
        <taxon>lamiids</taxon>
        <taxon>Solanales</taxon>
        <taxon>Solanaceae</taxon>
        <taxon>Solanoideae</taxon>
        <taxon>Solaneae</taxon>
        <taxon>Solanum</taxon>
    </lineage>
</organism>